<sequence length="12" mass="1449">DHLPHDVYSPRL</sequence>
<proteinExistence type="evidence at protein level"/>
<protein>
    <recommendedName>
        <fullName>Pyrokinin-4</fullName>
    </recommendedName>
    <alternativeName>
        <fullName>YXPRL-amide</fullName>
    </alternativeName>
</protein>
<name>PPK4_EURFL</name>
<accession>P84413</accession>
<comment type="function">
    <text evidence="1">Mediates visceral muscle contractile activity (myotropic activity).</text>
</comment>
<comment type="subcellular location">
    <subcellularLocation>
        <location evidence="4">Secreted</location>
    </subcellularLocation>
</comment>
<comment type="mass spectrometry" mass="1447.7" method="MALDI" evidence="3"/>
<comment type="similarity">
    <text evidence="2">Belongs to the pyrokinin family.</text>
</comment>
<evidence type="ECO:0000250" key="1">
    <source>
        <dbReference type="UniProtKB" id="P82619"/>
    </source>
</evidence>
<evidence type="ECO:0000255" key="2"/>
<evidence type="ECO:0000269" key="3">
    <source>
    </source>
</evidence>
<evidence type="ECO:0000305" key="4"/>
<reference evidence="4" key="1">
    <citation type="journal article" date="2005" name="Peptides">
        <title>Peptidomics of neurohemal organs from species of the cockroach family Blattidae: how do neuropeptides of closely related species differ?</title>
        <authorList>
            <person name="Predel R."/>
            <person name="Gaede G."/>
        </authorList>
    </citation>
    <scope>PROTEIN SEQUENCE</scope>
    <scope>MASS SPECTROMETRY</scope>
    <scope>AMIDATION AT LEU-12</scope>
    <source>
        <tissue evidence="3">Corpora allata</tissue>
    </source>
</reference>
<keyword id="KW-0027">Amidation</keyword>
<keyword id="KW-0903">Direct protein sequencing</keyword>
<keyword id="KW-0527">Neuropeptide</keyword>
<keyword id="KW-0964">Secreted</keyword>
<feature type="peptide" id="PRO_0000044330" description="Pyrokinin-4">
    <location>
        <begin position="1"/>
        <end position="12"/>
    </location>
</feature>
<feature type="modified residue" description="Leucine amide" evidence="3">
    <location>
        <position position="12"/>
    </location>
</feature>
<dbReference type="GO" id="GO:0005576">
    <property type="term" value="C:extracellular region"/>
    <property type="evidence" value="ECO:0007669"/>
    <property type="project" value="UniProtKB-SubCell"/>
</dbReference>
<dbReference type="GO" id="GO:0007218">
    <property type="term" value="P:neuropeptide signaling pathway"/>
    <property type="evidence" value="ECO:0007669"/>
    <property type="project" value="UniProtKB-KW"/>
</dbReference>
<organism>
    <name type="scientific">Eurycotis floridana</name>
    <name type="common">Florida woods cockroach</name>
    <name type="synonym">Skunk roach</name>
    <dbReference type="NCBI Taxonomy" id="303877"/>
    <lineage>
        <taxon>Eukaryota</taxon>
        <taxon>Metazoa</taxon>
        <taxon>Ecdysozoa</taxon>
        <taxon>Arthropoda</taxon>
        <taxon>Hexapoda</taxon>
        <taxon>Insecta</taxon>
        <taxon>Pterygota</taxon>
        <taxon>Neoptera</taxon>
        <taxon>Polyneoptera</taxon>
        <taxon>Dictyoptera</taxon>
        <taxon>Blattodea</taxon>
        <taxon>Blattoidea</taxon>
        <taxon>Blattidae</taxon>
        <taxon>Eurycotiinae</taxon>
        <taxon>Eurycotis</taxon>
    </lineage>
</organism>